<sequence length="527" mass="58811">MDLHRAPWKSSAAAAVLLLALFSGAAASSVEKNLAACLRDNDYDQLLQTVQDGLPHINTSNHVVIVGAGVAGLTAAKLLQDAGHRVTIVEANSRIGGRVETYRNKEEGWYADLGAMRIPSDHSIFRWFAKTLGVKLNPFIMDDHNTFYFVNGLLKRTYTVEANPDILNYKVRSSEKGKSANTLFQDALQKVKDEVEAHGCRAALMKYDKYSAKEYLKEVAGLSSEALRMIGDLLNEQSLMYTALSEMIYDQADVNDNVQYDEVTGGTDLFPRAFLSVLDVPILLNSKVQRIRRSRDGVTVSFKESQRSSLTDLHADMVLVTTTAKAALYMDFEPSLSIRKMEALRAVHYDSSTKIILTFSSRFWEEDGIRGGKSITDRPSRYIYYPSHTFPANSSVGVLLASYTWSDDSLLLQAASDEELKEMALRDLVKIHGERVRALCTGVVVKKWSLDPYSFGAFALFTPYQHLEYAKELFRSEGRVHFAGEHTAFPHAWMESAMKSAIRAATNINKQTLLNEGMNECPAPDEL</sequence>
<feature type="signal peptide" evidence="2">
    <location>
        <begin position="1"/>
        <end position="27"/>
    </location>
</feature>
<feature type="chain" id="PRO_0000401107" description="L-amino-acid oxidase" evidence="4">
    <location>
        <begin position="28"/>
        <end position="527"/>
    </location>
</feature>
<feature type="binding site" evidence="1">
    <location>
        <begin position="70"/>
        <end position="71"/>
    </location>
    <ligand>
        <name>FAD</name>
        <dbReference type="ChEBI" id="CHEBI:57692"/>
    </ligand>
</feature>
<feature type="binding site" evidence="1">
    <location>
        <begin position="90"/>
        <end position="91"/>
    </location>
    <ligand>
        <name>FAD</name>
        <dbReference type="ChEBI" id="CHEBI:57692"/>
    </ligand>
</feature>
<feature type="binding site" evidence="1">
    <location>
        <position position="98"/>
    </location>
    <ligand>
        <name>FAD</name>
        <dbReference type="ChEBI" id="CHEBI:57692"/>
    </ligand>
</feature>
<feature type="binding site" evidence="1">
    <location>
        <begin position="114"/>
        <end position="117"/>
    </location>
    <ligand>
        <name>FAD</name>
        <dbReference type="ChEBI" id="CHEBI:57692"/>
    </ligand>
</feature>
<feature type="binding site" evidence="1">
    <location>
        <position position="117"/>
    </location>
    <ligand>
        <name>substrate</name>
    </ligand>
</feature>
<feature type="binding site" evidence="1">
    <location>
        <position position="288"/>
    </location>
    <ligand>
        <name>FAD</name>
        <dbReference type="ChEBI" id="CHEBI:57692"/>
    </ligand>
</feature>
<feature type="binding site" evidence="1">
    <location>
        <position position="403"/>
    </location>
    <ligand>
        <name>substrate</name>
    </ligand>
</feature>
<feature type="binding site" evidence="1">
    <location>
        <position position="485"/>
    </location>
    <ligand>
        <name>FAD</name>
        <dbReference type="ChEBI" id="CHEBI:57692"/>
    </ligand>
</feature>
<feature type="binding site" evidence="1">
    <location>
        <begin position="492"/>
        <end position="497"/>
    </location>
    <ligand>
        <name>FAD</name>
        <dbReference type="ChEBI" id="CHEBI:57692"/>
    </ligand>
</feature>
<feature type="binding site" evidence="1">
    <location>
        <begin position="492"/>
        <end position="493"/>
    </location>
    <ligand>
        <name>substrate</name>
    </ligand>
</feature>
<feature type="glycosylation site" description="N-linked (GlcNAc...) asparagine" evidence="2">
    <location>
        <position position="58"/>
    </location>
</feature>
<feature type="glycosylation site" description="N-linked (GlcNAc...) asparagine" evidence="2">
    <location>
        <position position="393"/>
    </location>
</feature>
<feature type="disulfide bond" evidence="1">
    <location>
        <begin position="37"/>
        <end position="200"/>
    </location>
</feature>
<organism>
    <name type="scientific">Siganus canaliculatus</name>
    <name type="common">White-spotted spinefoot</name>
    <name type="synonym">Chaetodon canaliculatus</name>
    <dbReference type="NCBI Taxonomy" id="75042"/>
    <lineage>
        <taxon>Eukaryota</taxon>
        <taxon>Metazoa</taxon>
        <taxon>Chordata</taxon>
        <taxon>Craniata</taxon>
        <taxon>Vertebrata</taxon>
        <taxon>Euteleostomi</taxon>
        <taxon>Actinopterygii</taxon>
        <taxon>Neopterygii</taxon>
        <taxon>Teleostei</taxon>
        <taxon>Neoteleostei</taxon>
        <taxon>Acanthomorphata</taxon>
        <taxon>Eupercaria</taxon>
        <taxon>Siganidae</taxon>
        <taxon>Siganus</taxon>
    </lineage>
</organism>
<dbReference type="EC" id="1.4.3.2" evidence="1"/>
<dbReference type="EMBL" id="HQ540313">
    <property type="protein sequence ID" value="ADW77183.1"/>
    <property type="molecule type" value="mRNA"/>
</dbReference>
<dbReference type="SMR" id="P86810"/>
<dbReference type="GO" id="GO:0005576">
    <property type="term" value="C:extracellular region"/>
    <property type="evidence" value="ECO:0007669"/>
    <property type="project" value="UniProtKB-SubCell"/>
</dbReference>
<dbReference type="GO" id="GO:0001716">
    <property type="term" value="F:L-amino-acid oxidase activity"/>
    <property type="evidence" value="ECO:0007669"/>
    <property type="project" value="UniProtKB-EC"/>
</dbReference>
<dbReference type="GO" id="GO:0009063">
    <property type="term" value="P:amino acid catabolic process"/>
    <property type="evidence" value="ECO:0007669"/>
    <property type="project" value="TreeGrafter"/>
</dbReference>
<dbReference type="GO" id="GO:0042742">
    <property type="term" value="P:defense response to bacterium"/>
    <property type="evidence" value="ECO:0007669"/>
    <property type="project" value="UniProtKB-KW"/>
</dbReference>
<dbReference type="GO" id="GO:0045087">
    <property type="term" value="P:innate immune response"/>
    <property type="evidence" value="ECO:0007669"/>
    <property type="project" value="UniProtKB-KW"/>
</dbReference>
<dbReference type="FunFam" id="1.10.405.10:FF:000004">
    <property type="entry name" value="Amine oxidase"/>
    <property type="match status" value="1"/>
</dbReference>
<dbReference type="FunFam" id="3.50.50.60:FF:000242">
    <property type="entry name" value="Amine oxidase"/>
    <property type="match status" value="1"/>
</dbReference>
<dbReference type="FunFam" id="3.50.50.60:FF:000450">
    <property type="entry name" value="Amine oxidase"/>
    <property type="match status" value="1"/>
</dbReference>
<dbReference type="Gene3D" id="3.90.660.10">
    <property type="match status" value="1"/>
</dbReference>
<dbReference type="Gene3D" id="3.50.50.60">
    <property type="entry name" value="FAD/NAD(P)-binding domain"/>
    <property type="match status" value="1"/>
</dbReference>
<dbReference type="Gene3D" id="1.10.405.10">
    <property type="entry name" value="Guanine Nucleotide Dissociation Inhibitor, domain 1"/>
    <property type="match status" value="1"/>
</dbReference>
<dbReference type="InterPro" id="IPR002937">
    <property type="entry name" value="Amino_oxidase"/>
</dbReference>
<dbReference type="InterPro" id="IPR036188">
    <property type="entry name" value="FAD/NAD-bd_sf"/>
</dbReference>
<dbReference type="InterPro" id="IPR001613">
    <property type="entry name" value="Flavin_amine_oxidase"/>
</dbReference>
<dbReference type="InterPro" id="IPR050281">
    <property type="entry name" value="Flavin_monoamine_oxidase"/>
</dbReference>
<dbReference type="PANTHER" id="PTHR10742:SF342">
    <property type="entry name" value="AMINE OXIDASE"/>
    <property type="match status" value="1"/>
</dbReference>
<dbReference type="PANTHER" id="PTHR10742">
    <property type="entry name" value="FLAVIN MONOAMINE OXIDASE"/>
    <property type="match status" value="1"/>
</dbReference>
<dbReference type="Pfam" id="PF01593">
    <property type="entry name" value="Amino_oxidase"/>
    <property type="match status" value="1"/>
</dbReference>
<dbReference type="PRINTS" id="PR00757">
    <property type="entry name" value="AMINEOXDASEF"/>
</dbReference>
<dbReference type="SUPFAM" id="SSF54373">
    <property type="entry name" value="FAD-linked reductases, C-terminal domain"/>
    <property type="match status" value="1"/>
</dbReference>
<dbReference type="SUPFAM" id="SSF51905">
    <property type="entry name" value="FAD/NAD(P)-binding domain"/>
    <property type="match status" value="1"/>
</dbReference>
<proteinExistence type="evidence at protein level"/>
<reference evidence="7" key="1">
    <citation type="journal article" date="2011" name="Fish Shellfish Immunol.">
        <title>The serum of rabbitfish (Siganus oramin) has antimicrobial activity to some pathogenic organisms and a novel serum L-amino acid oxidase is isolated.</title>
        <authorList>
            <person name="Wang F."/>
            <person name="Li R."/>
            <person name="Xie M."/>
            <person name="Li A."/>
        </authorList>
    </citation>
    <scope>NUCLEOTIDE SEQUENCE [MRNA]</scope>
    <scope>PROTEIN SEQUENCE OF 28-42; 98-118; 131-152; 209-218 AND 373-382</scope>
    <scope>FUNCTION</scope>
    <scope>SUBCELLULAR LOCATION</scope>
    <scope>TISSUE SPECIFICITY</scope>
    <scope>MASS SPECTROMETRY</scope>
    <source>
        <tissue evidence="4">Spleen</tissue>
    </source>
</reference>
<reference evidence="7" key="2">
    <citation type="journal article" date="2010" name="Fish Shellfish Immunol.">
        <title>A novel protein isolated from the serum of rabbitfish (Siganus oramin) is lethal to Cryptocaryon irritans.</title>
        <authorList>
            <person name="Wang F.H."/>
            <person name="Xie M.Q."/>
            <person name="Li A.X."/>
        </authorList>
    </citation>
    <scope>PROTEIN SEQUENCE OF 28-42</scope>
    <scope>FUNCTION</scope>
    <scope>SUBUNIT</scope>
    <scope>SUBCELLULAR LOCATION</scope>
    <scope>TISSUE SPECIFICITY</scope>
    <scope>MASS SPECTROMETRY</scope>
    <source>
        <tissue evidence="3">Serum</tissue>
    </source>
</reference>
<accession>P86810</accession>
<accession>F8S6K5</accession>
<keyword id="KW-0044">Antibiotic</keyword>
<keyword id="KW-0929">Antimicrobial</keyword>
<keyword id="KW-0903">Direct protein sequencing</keyword>
<keyword id="KW-1015">Disulfide bond</keyword>
<keyword id="KW-0274">FAD</keyword>
<keyword id="KW-0285">Flavoprotein</keyword>
<keyword id="KW-0325">Glycoprotein</keyword>
<keyword id="KW-0391">Immunity</keyword>
<keyword id="KW-0399">Innate immunity</keyword>
<keyword id="KW-0560">Oxidoreductase</keyword>
<keyword id="KW-0964">Secreted</keyword>
<keyword id="KW-0732">Signal</keyword>
<protein>
    <recommendedName>
        <fullName evidence="6">L-amino-acid oxidase</fullName>
        <ecNumber evidence="1">1.4.3.2</ecNumber>
    </recommendedName>
    <alternativeName>
        <fullName evidence="5">Antiparasitic protein</fullName>
        <shortName evidence="5">APP</shortName>
    </alternativeName>
    <alternativeName>
        <fullName>Serum L-amino-acid oxidase</fullName>
        <shortName evidence="6">SR-LAAO</shortName>
    </alternativeName>
</protein>
<name>OXLA_SIGCA</name>
<comment type="function">
    <text evidence="3 4">Inhibits the growth of both Gram-negative and Gram-positive bacteria. Displays strong antibacterial activity towards V.cholerae and E.tarda. Causes deformation of the surface of S.aureus and the formation of pores on the surface of E.coli. Strong antiparasitic activity is seen towards C.irritans, T.brucei and I.multifiliis. Cilia of treated theronts are lost and the macronucleus swells, inducing cell membrane rupture and efflux of the cytoplasm.</text>
</comment>
<comment type="catalytic activity">
    <reaction evidence="1">
        <text>an L-alpha-amino acid + O2 + H2O = a 2-oxocarboxylate + H2O2 + NH4(+)</text>
        <dbReference type="Rhea" id="RHEA:13781"/>
        <dbReference type="ChEBI" id="CHEBI:15377"/>
        <dbReference type="ChEBI" id="CHEBI:15379"/>
        <dbReference type="ChEBI" id="CHEBI:16240"/>
        <dbReference type="ChEBI" id="CHEBI:28938"/>
        <dbReference type="ChEBI" id="CHEBI:35179"/>
        <dbReference type="ChEBI" id="CHEBI:59869"/>
        <dbReference type="EC" id="1.4.3.2"/>
    </reaction>
</comment>
<comment type="cofactor">
    <cofactor evidence="1">
        <name>FAD</name>
        <dbReference type="ChEBI" id="CHEBI:57692"/>
    </cofactor>
</comment>
<comment type="subunit">
    <text evidence="3">Homodimer.</text>
</comment>
<comment type="subcellular location">
    <subcellularLocation>
        <location evidence="3 4">Secreted</location>
    </subcellularLocation>
</comment>
<comment type="tissue specificity">
    <text evidence="3 4">Expression mainly observed in plasma, spleen, kidney and gills with low levels detected in blood and no expression detected in brain, liver, heart, muscle or intestine (at protein level).</text>
</comment>
<comment type="mass spectrometry" mass="61739.87" method="MALDI" evidence="3 4"/>
<comment type="mass spectrometry" mass="58810.79" method="MALDI" evidence="3 4"/>
<comment type="similarity">
    <text evidence="2">Belongs to the flavin monoamine oxidase family. FIG1 subfamily.</text>
</comment>
<evidence type="ECO:0000250" key="1">
    <source>
        <dbReference type="UniProtKB" id="Q90W54"/>
    </source>
</evidence>
<evidence type="ECO:0000255" key="2"/>
<evidence type="ECO:0000269" key="3">
    <source>
    </source>
</evidence>
<evidence type="ECO:0000269" key="4">
    <source>
    </source>
</evidence>
<evidence type="ECO:0000303" key="5">
    <source>
    </source>
</evidence>
<evidence type="ECO:0000303" key="6">
    <source>
    </source>
</evidence>
<evidence type="ECO:0000305" key="7"/>